<sequence>MAKFDVYDLSKKKVGELDLADAVFAGEVNEHLFYEVVKAKLASDRSGTHAVKNRSLVSGGGKKPWKQKHTGRARQGSTRASQWVGGGKAMGPKPRDYSYDVPKKVRKAALRSALALRSKDQKLVIVQEWKPEGPKTAAAAKVLAALGAKKALVVDDAANLALARSVRNLAGSDFLAVEGLNVYDILRHDALVLTADTAKKLEASLS</sequence>
<protein>
    <recommendedName>
        <fullName evidence="1">Large ribosomal subunit protein uL4</fullName>
    </recommendedName>
    <alternativeName>
        <fullName evidence="3">50S ribosomal protein L4</fullName>
    </alternativeName>
</protein>
<evidence type="ECO:0000255" key="1">
    <source>
        <dbReference type="HAMAP-Rule" id="MF_01328"/>
    </source>
</evidence>
<evidence type="ECO:0000256" key="2">
    <source>
        <dbReference type="SAM" id="MobiDB-lite"/>
    </source>
</evidence>
<evidence type="ECO:0000305" key="3"/>
<gene>
    <name evidence="1" type="primary">rplD</name>
    <name type="ordered locus">Adeh_1945</name>
</gene>
<keyword id="KW-1185">Reference proteome</keyword>
<keyword id="KW-0687">Ribonucleoprotein</keyword>
<keyword id="KW-0689">Ribosomal protein</keyword>
<keyword id="KW-0694">RNA-binding</keyword>
<keyword id="KW-0699">rRNA-binding</keyword>
<name>RL4_ANADE</name>
<reference key="1">
    <citation type="submission" date="2006-01" db="EMBL/GenBank/DDBJ databases">
        <title>Complete sequence of Anaeromyxobacter dehalogenans 2CP-C.</title>
        <authorList>
            <person name="Copeland A."/>
            <person name="Lucas S."/>
            <person name="Lapidus A."/>
            <person name="Barry K."/>
            <person name="Detter J.C."/>
            <person name="Glavina T."/>
            <person name="Hammon N."/>
            <person name="Israni S."/>
            <person name="Pitluck S."/>
            <person name="Brettin T."/>
            <person name="Bruce D."/>
            <person name="Han C."/>
            <person name="Tapia R."/>
            <person name="Gilna P."/>
            <person name="Kiss H."/>
            <person name="Schmutz J."/>
            <person name="Larimer F."/>
            <person name="Land M."/>
            <person name="Kyrpides N."/>
            <person name="Anderson I."/>
            <person name="Sanford R.A."/>
            <person name="Ritalahti K.M."/>
            <person name="Thomas H.S."/>
            <person name="Kirby J.R."/>
            <person name="Zhulin I.B."/>
            <person name="Loeffler F.E."/>
            <person name="Richardson P."/>
        </authorList>
    </citation>
    <scope>NUCLEOTIDE SEQUENCE [LARGE SCALE GENOMIC DNA]</scope>
    <source>
        <strain>2CP-C</strain>
    </source>
</reference>
<accession>Q2IJ86</accession>
<feature type="chain" id="PRO_0000242332" description="Large ribosomal subunit protein uL4">
    <location>
        <begin position="1"/>
        <end position="206"/>
    </location>
</feature>
<feature type="region of interest" description="Disordered" evidence="2">
    <location>
        <begin position="48"/>
        <end position="97"/>
    </location>
</feature>
<feature type="compositionally biased region" description="Basic residues" evidence="2">
    <location>
        <begin position="63"/>
        <end position="72"/>
    </location>
</feature>
<comment type="function">
    <text evidence="1">One of the primary rRNA binding proteins, this protein initially binds near the 5'-end of the 23S rRNA. It is important during the early stages of 50S assembly. It makes multiple contacts with different domains of the 23S rRNA in the assembled 50S subunit and ribosome.</text>
</comment>
<comment type="function">
    <text evidence="1">Forms part of the polypeptide exit tunnel.</text>
</comment>
<comment type="subunit">
    <text evidence="1">Part of the 50S ribosomal subunit.</text>
</comment>
<comment type="similarity">
    <text evidence="1">Belongs to the universal ribosomal protein uL4 family.</text>
</comment>
<proteinExistence type="inferred from homology"/>
<dbReference type="EMBL" id="CP000251">
    <property type="protein sequence ID" value="ABC81716.1"/>
    <property type="molecule type" value="Genomic_DNA"/>
</dbReference>
<dbReference type="RefSeq" id="WP_011420999.1">
    <property type="nucleotide sequence ID" value="NC_007760.1"/>
</dbReference>
<dbReference type="SMR" id="Q2IJ86"/>
<dbReference type="STRING" id="290397.Adeh_1945"/>
<dbReference type="KEGG" id="ade:Adeh_1945"/>
<dbReference type="eggNOG" id="COG0088">
    <property type="taxonomic scope" value="Bacteria"/>
</dbReference>
<dbReference type="HOGENOM" id="CLU_041575_5_2_7"/>
<dbReference type="OrthoDB" id="9803201at2"/>
<dbReference type="Proteomes" id="UP000001935">
    <property type="component" value="Chromosome"/>
</dbReference>
<dbReference type="GO" id="GO:1990904">
    <property type="term" value="C:ribonucleoprotein complex"/>
    <property type="evidence" value="ECO:0007669"/>
    <property type="project" value="UniProtKB-KW"/>
</dbReference>
<dbReference type="GO" id="GO:0005840">
    <property type="term" value="C:ribosome"/>
    <property type="evidence" value="ECO:0007669"/>
    <property type="project" value="UniProtKB-KW"/>
</dbReference>
<dbReference type="GO" id="GO:0019843">
    <property type="term" value="F:rRNA binding"/>
    <property type="evidence" value="ECO:0007669"/>
    <property type="project" value="UniProtKB-UniRule"/>
</dbReference>
<dbReference type="GO" id="GO:0003735">
    <property type="term" value="F:structural constituent of ribosome"/>
    <property type="evidence" value="ECO:0007669"/>
    <property type="project" value="InterPro"/>
</dbReference>
<dbReference type="GO" id="GO:0006412">
    <property type="term" value="P:translation"/>
    <property type="evidence" value="ECO:0007669"/>
    <property type="project" value="UniProtKB-UniRule"/>
</dbReference>
<dbReference type="Gene3D" id="3.40.1370.10">
    <property type="match status" value="1"/>
</dbReference>
<dbReference type="HAMAP" id="MF_01328_B">
    <property type="entry name" value="Ribosomal_uL4_B"/>
    <property type="match status" value="1"/>
</dbReference>
<dbReference type="InterPro" id="IPR002136">
    <property type="entry name" value="Ribosomal_uL4"/>
</dbReference>
<dbReference type="InterPro" id="IPR013005">
    <property type="entry name" value="Ribosomal_uL4-like"/>
</dbReference>
<dbReference type="InterPro" id="IPR023574">
    <property type="entry name" value="Ribosomal_uL4_dom_sf"/>
</dbReference>
<dbReference type="NCBIfam" id="TIGR03953">
    <property type="entry name" value="rplD_bact"/>
    <property type="match status" value="1"/>
</dbReference>
<dbReference type="PANTHER" id="PTHR10746">
    <property type="entry name" value="50S RIBOSOMAL PROTEIN L4"/>
    <property type="match status" value="1"/>
</dbReference>
<dbReference type="PANTHER" id="PTHR10746:SF6">
    <property type="entry name" value="LARGE RIBOSOMAL SUBUNIT PROTEIN UL4M"/>
    <property type="match status" value="1"/>
</dbReference>
<dbReference type="Pfam" id="PF00573">
    <property type="entry name" value="Ribosomal_L4"/>
    <property type="match status" value="1"/>
</dbReference>
<dbReference type="SUPFAM" id="SSF52166">
    <property type="entry name" value="Ribosomal protein L4"/>
    <property type="match status" value="1"/>
</dbReference>
<organism>
    <name type="scientific">Anaeromyxobacter dehalogenans (strain 2CP-C)</name>
    <dbReference type="NCBI Taxonomy" id="290397"/>
    <lineage>
        <taxon>Bacteria</taxon>
        <taxon>Pseudomonadati</taxon>
        <taxon>Myxococcota</taxon>
        <taxon>Myxococcia</taxon>
        <taxon>Myxococcales</taxon>
        <taxon>Cystobacterineae</taxon>
        <taxon>Anaeromyxobacteraceae</taxon>
        <taxon>Anaeromyxobacter</taxon>
    </lineage>
</organism>